<keyword id="KW-0963">Cytoplasm</keyword>
<keyword id="KW-0240">DNA-directed RNA polymerase</keyword>
<keyword id="KW-0548">Nucleotidyltransferase</keyword>
<keyword id="KW-0804">Transcription</keyword>
<keyword id="KW-0808">Transferase</keyword>
<accession>C4KIV6</accession>
<sequence length="84" mass="9671">MRGSSNRKIDPRIHYLVPKHEVLSIDEAYKILKELGIRPEQLPWIRASDPVARSINAKPGDIIRIIRKSQLYGEVVSYRYVISG</sequence>
<evidence type="ECO:0000255" key="1">
    <source>
        <dbReference type="HAMAP-Rule" id="MF_00025"/>
    </source>
</evidence>
<name>RPO5_SACI6</name>
<feature type="chain" id="PRO_1000201950" description="DNA-directed RNA polymerase subunit Rpo5">
    <location>
        <begin position="1"/>
        <end position="84"/>
    </location>
</feature>
<protein>
    <recommendedName>
        <fullName evidence="1">DNA-directed RNA polymerase subunit Rpo5</fullName>
        <ecNumber evidence="1">2.7.7.6</ecNumber>
    </recommendedName>
    <alternativeName>
        <fullName evidence="1">DNA-directed RNA polymerase subunit H</fullName>
    </alternativeName>
</protein>
<comment type="function">
    <text evidence="1">DNA-dependent RNA polymerase (RNAP) catalyzes the transcription of DNA into RNA using the four ribonucleoside triphosphates as substrates.</text>
</comment>
<comment type="catalytic activity">
    <reaction evidence="1">
        <text>RNA(n) + a ribonucleoside 5'-triphosphate = RNA(n+1) + diphosphate</text>
        <dbReference type="Rhea" id="RHEA:21248"/>
        <dbReference type="Rhea" id="RHEA-COMP:14527"/>
        <dbReference type="Rhea" id="RHEA-COMP:17342"/>
        <dbReference type="ChEBI" id="CHEBI:33019"/>
        <dbReference type="ChEBI" id="CHEBI:61557"/>
        <dbReference type="ChEBI" id="CHEBI:140395"/>
        <dbReference type="EC" id="2.7.7.6"/>
    </reaction>
</comment>
<comment type="subunit">
    <text evidence="1">Part of the RNA polymerase complex.</text>
</comment>
<comment type="subcellular location">
    <subcellularLocation>
        <location evidence="1">Cytoplasm</location>
    </subcellularLocation>
</comment>
<comment type="similarity">
    <text evidence="1">Belongs to the archaeal Rpo5/eukaryotic RPB5 RNA polymerase subunit family.</text>
</comment>
<organism>
    <name type="scientific">Saccharolobus islandicus (strain M.16.4 / Kamchatka #3)</name>
    <name type="common">Sulfolobus islandicus</name>
    <dbReference type="NCBI Taxonomy" id="426118"/>
    <lineage>
        <taxon>Archaea</taxon>
        <taxon>Thermoproteota</taxon>
        <taxon>Thermoprotei</taxon>
        <taxon>Sulfolobales</taxon>
        <taxon>Sulfolobaceae</taxon>
        <taxon>Saccharolobus</taxon>
    </lineage>
</organism>
<dbReference type="EC" id="2.7.7.6" evidence="1"/>
<dbReference type="EMBL" id="CP001402">
    <property type="protein sequence ID" value="ACR42520.1"/>
    <property type="molecule type" value="Genomic_DNA"/>
</dbReference>
<dbReference type="RefSeq" id="WP_012711883.1">
    <property type="nucleotide sequence ID" value="NC_012726.1"/>
</dbReference>
<dbReference type="SMR" id="C4KIV6"/>
<dbReference type="KEGG" id="sid:M164_1917"/>
<dbReference type="HOGENOM" id="CLU_058320_4_0_2"/>
<dbReference type="Proteomes" id="UP000001479">
    <property type="component" value="Chromosome"/>
</dbReference>
<dbReference type="GO" id="GO:0005737">
    <property type="term" value="C:cytoplasm"/>
    <property type="evidence" value="ECO:0007669"/>
    <property type="project" value="UniProtKB-SubCell"/>
</dbReference>
<dbReference type="GO" id="GO:0000428">
    <property type="term" value="C:DNA-directed RNA polymerase complex"/>
    <property type="evidence" value="ECO:0007669"/>
    <property type="project" value="UniProtKB-KW"/>
</dbReference>
<dbReference type="GO" id="GO:0003677">
    <property type="term" value="F:DNA binding"/>
    <property type="evidence" value="ECO:0007669"/>
    <property type="project" value="InterPro"/>
</dbReference>
<dbReference type="GO" id="GO:0003899">
    <property type="term" value="F:DNA-directed RNA polymerase activity"/>
    <property type="evidence" value="ECO:0007669"/>
    <property type="project" value="UniProtKB-UniRule"/>
</dbReference>
<dbReference type="GO" id="GO:0006366">
    <property type="term" value="P:transcription by RNA polymerase II"/>
    <property type="evidence" value="ECO:0007669"/>
    <property type="project" value="TreeGrafter"/>
</dbReference>
<dbReference type="GO" id="GO:0006362">
    <property type="term" value="P:transcription elongation by RNA polymerase I"/>
    <property type="evidence" value="ECO:0007669"/>
    <property type="project" value="TreeGrafter"/>
</dbReference>
<dbReference type="GO" id="GO:0042797">
    <property type="term" value="P:tRNA transcription by RNA polymerase III"/>
    <property type="evidence" value="ECO:0007669"/>
    <property type="project" value="TreeGrafter"/>
</dbReference>
<dbReference type="Gene3D" id="3.90.940.20">
    <property type="entry name" value="RPB5-like RNA polymerase subunit"/>
    <property type="match status" value="1"/>
</dbReference>
<dbReference type="HAMAP" id="MF_00025">
    <property type="entry name" value="RNApol_Rpo5_RPB5"/>
    <property type="match status" value="1"/>
</dbReference>
<dbReference type="InterPro" id="IPR014381">
    <property type="entry name" value="Arch_Rpo5/euc_Rpb5"/>
</dbReference>
<dbReference type="InterPro" id="IPR000783">
    <property type="entry name" value="RNA_pol_subH/Rpb5_C"/>
</dbReference>
<dbReference type="InterPro" id="IPR020608">
    <property type="entry name" value="RNA_pol_subH/Rpb5_CS"/>
</dbReference>
<dbReference type="InterPro" id="IPR035913">
    <property type="entry name" value="RPB5-like_sf"/>
</dbReference>
<dbReference type="NCBIfam" id="NF007129">
    <property type="entry name" value="PRK09570.1"/>
    <property type="match status" value="1"/>
</dbReference>
<dbReference type="PANTHER" id="PTHR10535">
    <property type="entry name" value="DNA-DIRECTED RNA POLYMERASES I, II, AND III SUBUNIT RPABC1"/>
    <property type="match status" value="1"/>
</dbReference>
<dbReference type="PANTHER" id="PTHR10535:SF0">
    <property type="entry name" value="DNA-DIRECTED RNA POLYMERASES I, II, AND III SUBUNIT RPABC1"/>
    <property type="match status" value="1"/>
</dbReference>
<dbReference type="Pfam" id="PF01191">
    <property type="entry name" value="RNA_pol_Rpb5_C"/>
    <property type="match status" value="1"/>
</dbReference>
<dbReference type="SUPFAM" id="SSF55287">
    <property type="entry name" value="RPB5-like RNA polymerase subunit"/>
    <property type="match status" value="1"/>
</dbReference>
<dbReference type="PROSITE" id="PS01110">
    <property type="entry name" value="RNA_POL_H_23KD"/>
    <property type="match status" value="1"/>
</dbReference>
<proteinExistence type="inferred from homology"/>
<gene>
    <name evidence="1" type="primary">rpo5</name>
    <name evidence="1" type="synonym">rpoH</name>
    <name type="ordered locus">M164_1917</name>
</gene>
<reference key="1">
    <citation type="journal article" date="2009" name="Proc. Natl. Acad. Sci. U.S.A.">
        <title>Biogeography of the Sulfolobus islandicus pan-genome.</title>
        <authorList>
            <person name="Reno M.L."/>
            <person name="Held N.L."/>
            <person name="Fields C.J."/>
            <person name="Burke P.V."/>
            <person name="Whitaker R.J."/>
        </authorList>
    </citation>
    <scope>NUCLEOTIDE SEQUENCE [LARGE SCALE GENOMIC DNA]</scope>
    <source>
        <strain>M.16.4 / Kamchatka #3</strain>
    </source>
</reference>